<dbReference type="EMBL" id="CP000113">
    <property type="protein sequence ID" value="ABF87889.1"/>
    <property type="molecule type" value="Genomic_DNA"/>
</dbReference>
<dbReference type="RefSeq" id="WP_011551554.1">
    <property type="nucleotide sequence ID" value="NC_008095.1"/>
</dbReference>
<dbReference type="SMR" id="Q1DCC8"/>
<dbReference type="STRING" id="246197.MXAN_1438"/>
<dbReference type="EnsemblBacteria" id="ABF87889">
    <property type="protein sequence ID" value="ABF87889"/>
    <property type="gene ID" value="MXAN_1438"/>
</dbReference>
<dbReference type="GeneID" id="41358884"/>
<dbReference type="KEGG" id="mxa:MXAN_1438"/>
<dbReference type="eggNOG" id="COG1058">
    <property type="taxonomic scope" value="Bacteria"/>
</dbReference>
<dbReference type="eggNOG" id="COG1546">
    <property type="taxonomic scope" value="Bacteria"/>
</dbReference>
<dbReference type="HOGENOM" id="CLU_030805_9_3_7"/>
<dbReference type="OrthoDB" id="9801454at2"/>
<dbReference type="Proteomes" id="UP000002402">
    <property type="component" value="Chromosome"/>
</dbReference>
<dbReference type="CDD" id="cd00885">
    <property type="entry name" value="cinA"/>
    <property type="match status" value="1"/>
</dbReference>
<dbReference type="Gene3D" id="3.30.70.2860">
    <property type="match status" value="1"/>
</dbReference>
<dbReference type="Gene3D" id="3.90.950.20">
    <property type="entry name" value="CinA-like"/>
    <property type="match status" value="1"/>
</dbReference>
<dbReference type="Gene3D" id="3.40.980.10">
    <property type="entry name" value="MoaB/Mog-like domain"/>
    <property type="match status" value="1"/>
</dbReference>
<dbReference type="HAMAP" id="MF_00226_B">
    <property type="entry name" value="CinA_B"/>
    <property type="match status" value="1"/>
</dbReference>
<dbReference type="InterPro" id="IPR050101">
    <property type="entry name" value="CinA"/>
</dbReference>
<dbReference type="InterPro" id="IPR036653">
    <property type="entry name" value="CinA-like_C"/>
</dbReference>
<dbReference type="InterPro" id="IPR008136">
    <property type="entry name" value="CinA_C"/>
</dbReference>
<dbReference type="InterPro" id="IPR041424">
    <property type="entry name" value="CinA_KH"/>
</dbReference>
<dbReference type="InterPro" id="IPR008135">
    <property type="entry name" value="Competence-induced_CinA"/>
</dbReference>
<dbReference type="InterPro" id="IPR036425">
    <property type="entry name" value="MoaB/Mog-like_dom_sf"/>
</dbReference>
<dbReference type="InterPro" id="IPR001453">
    <property type="entry name" value="MoaB/Mog_dom"/>
</dbReference>
<dbReference type="NCBIfam" id="TIGR00200">
    <property type="entry name" value="cinA_nterm"/>
    <property type="match status" value="1"/>
</dbReference>
<dbReference type="NCBIfam" id="TIGR00199">
    <property type="entry name" value="PncC_domain"/>
    <property type="match status" value="1"/>
</dbReference>
<dbReference type="PANTHER" id="PTHR13939">
    <property type="entry name" value="NICOTINAMIDE-NUCLEOTIDE AMIDOHYDROLASE PNCC"/>
    <property type="match status" value="1"/>
</dbReference>
<dbReference type="PANTHER" id="PTHR13939:SF0">
    <property type="entry name" value="NMN AMIDOHYDROLASE-LIKE PROTEIN YFAY"/>
    <property type="match status" value="1"/>
</dbReference>
<dbReference type="Pfam" id="PF02464">
    <property type="entry name" value="CinA"/>
    <property type="match status" value="1"/>
</dbReference>
<dbReference type="Pfam" id="PF18146">
    <property type="entry name" value="CinA_KH"/>
    <property type="match status" value="1"/>
</dbReference>
<dbReference type="Pfam" id="PF00994">
    <property type="entry name" value="MoCF_biosynth"/>
    <property type="match status" value="1"/>
</dbReference>
<dbReference type="PIRSF" id="PIRSF006728">
    <property type="entry name" value="CinA"/>
    <property type="match status" value="1"/>
</dbReference>
<dbReference type="SMART" id="SM00852">
    <property type="entry name" value="MoCF_biosynth"/>
    <property type="match status" value="1"/>
</dbReference>
<dbReference type="SUPFAM" id="SSF142433">
    <property type="entry name" value="CinA-like"/>
    <property type="match status" value="1"/>
</dbReference>
<dbReference type="SUPFAM" id="SSF53218">
    <property type="entry name" value="Molybdenum cofactor biosynthesis proteins"/>
    <property type="match status" value="1"/>
</dbReference>
<accession>Q1DCC8</accession>
<name>CINAL_MYXXD</name>
<protein>
    <recommendedName>
        <fullName evidence="1">CinA-like protein</fullName>
    </recommendedName>
</protein>
<reference key="1">
    <citation type="journal article" date="2006" name="Proc. Natl. Acad. Sci. U.S.A.">
        <title>Evolution of sensory complexity recorded in a myxobacterial genome.</title>
        <authorList>
            <person name="Goldman B.S."/>
            <person name="Nierman W.C."/>
            <person name="Kaiser D."/>
            <person name="Slater S.C."/>
            <person name="Durkin A.S."/>
            <person name="Eisen J.A."/>
            <person name="Ronning C.M."/>
            <person name="Barbazuk W.B."/>
            <person name="Blanchard M."/>
            <person name="Field C."/>
            <person name="Halling C."/>
            <person name="Hinkle G."/>
            <person name="Iartchuk O."/>
            <person name="Kim H.S."/>
            <person name="Mackenzie C."/>
            <person name="Madupu R."/>
            <person name="Miller N."/>
            <person name="Shvartsbeyn A."/>
            <person name="Sullivan S.A."/>
            <person name="Vaudin M."/>
            <person name="Wiegand R."/>
            <person name="Kaplan H.B."/>
        </authorList>
    </citation>
    <scope>NUCLEOTIDE SEQUENCE [LARGE SCALE GENOMIC DNA]</scope>
    <source>
        <strain>DK1622</strain>
    </source>
</reference>
<feature type="chain" id="PRO_1000058717" description="CinA-like protein">
    <location>
        <begin position="1"/>
        <end position="421"/>
    </location>
</feature>
<comment type="similarity">
    <text evidence="1">Belongs to the CinA family.</text>
</comment>
<keyword id="KW-1185">Reference proteome</keyword>
<proteinExistence type="inferred from homology"/>
<evidence type="ECO:0000255" key="1">
    <source>
        <dbReference type="HAMAP-Rule" id="MF_00226"/>
    </source>
</evidence>
<gene>
    <name type="ordered locus">MXAN_1438</name>
</gene>
<organism>
    <name type="scientific">Myxococcus xanthus (strain DK1622)</name>
    <dbReference type="NCBI Taxonomy" id="246197"/>
    <lineage>
        <taxon>Bacteria</taxon>
        <taxon>Pseudomonadati</taxon>
        <taxon>Myxococcota</taxon>
        <taxon>Myxococcia</taxon>
        <taxon>Myxococcales</taxon>
        <taxon>Cystobacterineae</taxon>
        <taxon>Myxococcaceae</taxon>
        <taxon>Myxococcus</taxon>
    </lineage>
</organism>
<sequence>MRVELLCTGDELVTGLITDTNSTYLEARLFDLGVKVERVVLVGDVRPDIIQSLKEAASRADVVVVSGGLGPTADDFTLECAAEAAGVPLEEDAQVLDWLHQRYAARGLSPNPSALRMARVPQGSEPVKNPEGSAPLVVMKLGGAQLFFLPGVPREFKALLEGEVLPRIRATLDARPERTYRAFRLLRTVGIPESELDIAVAPMGPRHPRIVFGFRTHAPENHLKLMAEAPSQSEADAALAAVEVECRQMLGTKLFGVDSEAYAAVVLETLRRAGATLAVAESCTGGLIAQQLTAVPGSSEVFIGGAVVYSEKMKSAWVGVPPDVLARHTAVSRETAEAMAEGVRDACGTTYGLSVTGYAGPGGGTPEDPVGTVYCALSAPGVPTRCERISVTGDRDRVRLFAASHTLEMLRQHLLAAPATP</sequence>